<evidence type="ECO:0000255" key="1">
    <source>
        <dbReference type="HAMAP-Rule" id="MF_00108"/>
    </source>
</evidence>
<proteinExistence type="inferred from homology"/>
<reference key="1">
    <citation type="journal article" date="2011" name="J. Bacteriol.">
        <title>Comparative genomics of 28 Salmonella enterica isolates: evidence for CRISPR-mediated adaptive sublineage evolution.</title>
        <authorList>
            <person name="Fricke W.F."/>
            <person name="Mammel M.K."/>
            <person name="McDermott P.F."/>
            <person name="Tartera C."/>
            <person name="White D.G."/>
            <person name="Leclerc J.E."/>
            <person name="Ravel J."/>
            <person name="Cebula T.A."/>
        </authorList>
    </citation>
    <scope>NUCLEOTIDE SEQUENCE [LARGE SCALE GENOMIC DNA]</scope>
    <source>
        <strain>SL254</strain>
    </source>
</reference>
<protein>
    <recommendedName>
        <fullName evidence="1">2-C-methyl-D-erythritol 4-phosphate cytidylyltransferase</fullName>
        <ecNumber evidence="1">2.7.7.60</ecNumber>
    </recommendedName>
    <alternativeName>
        <fullName evidence="1">4-diphosphocytidyl-2C-methyl-D-erythritol synthase</fullName>
    </alternativeName>
    <alternativeName>
        <fullName evidence="1">MEP cytidylyltransferase</fullName>
        <shortName evidence="1">MCT</shortName>
    </alternativeName>
</protein>
<gene>
    <name evidence="1" type="primary">ispD</name>
    <name type="ordered locus">SNSL254_A3136</name>
</gene>
<organism>
    <name type="scientific">Salmonella newport (strain SL254)</name>
    <dbReference type="NCBI Taxonomy" id="423368"/>
    <lineage>
        <taxon>Bacteria</taxon>
        <taxon>Pseudomonadati</taxon>
        <taxon>Pseudomonadota</taxon>
        <taxon>Gammaproteobacteria</taxon>
        <taxon>Enterobacterales</taxon>
        <taxon>Enterobacteriaceae</taxon>
        <taxon>Salmonella</taxon>
    </lineage>
</organism>
<feature type="chain" id="PRO_1000094347" description="2-C-methyl-D-erythritol 4-phosphate cytidylyltransferase">
    <location>
        <begin position="1"/>
        <end position="236"/>
    </location>
</feature>
<feature type="site" description="Transition state stabilizer" evidence="1">
    <location>
        <position position="20"/>
    </location>
</feature>
<feature type="site" description="Transition state stabilizer" evidence="1">
    <location>
        <position position="27"/>
    </location>
</feature>
<feature type="site" description="Positions MEP for the nucleophilic attack" evidence="1">
    <location>
        <position position="157"/>
    </location>
</feature>
<feature type="site" description="Positions MEP for the nucleophilic attack" evidence="1">
    <location>
        <position position="213"/>
    </location>
</feature>
<comment type="function">
    <text evidence="1">Catalyzes the formation of 4-diphosphocytidyl-2-C-methyl-D-erythritol from CTP and 2-C-methyl-D-erythritol 4-phosphate (MEP).</text>
</comment>
<comment type="catalytic activity">
    <reaction evidence="1">
        <text>2-C-methyl-D-erythritol 4-phosphate + CTP + H(+) = 4-CDP-2-C-methyl-D-erythritol + diphosphate</text>
        <dbReference type="Rhea" id="RHEA:13429"/>
        <dbReference type="ChEBI" id="CHEBI:15378"/>
        <dbReference type="ChEBI" id="CHEBI:33019"/>
        <dbReference type="ChEBI" id="CHEBI:37563"/>
        <dbReference type="ChEBI" id="CHEBI:57823"/>
        <dbReference type="ChEBI" id="CHEBI:58262"/>
        <dbReference type="EC" id="2.7.7.60"/>
    </reaction>
</comment>
<comment type="pathway">
    <text evidence="1">Isoprenoid biosynthesis; isopentenyl diphosphate biosynthesis via DXP pathway; isopentenyl diphosphate from 1-deoxy-D-xylulose 5-phosphate: step 2/6.</text>
</comment>
<comment type="subunit">
    <text evidence="1">Homodimer.</text>
</comment>
<comment type="similarity">
    <text evidence="1">Belongs to the IspD/TarI cytidylyltransferase family. IspD subfamily.</text>
</comment>
<sequence length="236" mass="25731">MAATLLDVCAVVPAAGFGRRMQTECPKQYLSIGNKTILEHSVHALLAHPRVTRVVIAISPGDHRFAQLPLADHPQITVVDGGNERADSVLAGLQAVAEAQWVLVHDAARPCLHQDDLARLLAISENSRVGGILASPVRDTMKRGEPGKNAIAHTVERADLWHALTPQFFPRELLHDCLTRALNEGATITDEASALEYCGFHPALVEGRADNIKVTRPEDLALAEFYLTRTIHQEKA</sequence>
<name>ISPD_SALNS</name>
<accession>B4T457</accession>
<keyword id="KW-0414">Isoprene biosynthesis</keyword>
<keyword id="KW-0548">Nucleotidyltransferase</keyword>
<keyword id="KW-0808">Transferase</keyword>
<dbReference type="EC" id="2.7.7.60" evidence="1"/>
<dbReference type="EMBL" id="CP001113">
    <property type="protein sequence ID" value="ACF63848.1"/>
    <property type="molecule type" value="Genomic_DNA"/>
</dbReference>
<dbReference type="RefSeq" id="WP_000741641.1">
    <property type="nucleotide sequence ID" value="NZ_CCMR01000001.1"/>
</dbReference>
<dbReference type="SMR" id="B4T457"/>
<dbReference type="KEGG" id="see:SNSL254_A3136"/>
<dbReference type="HOGENOM" id="CLU_061281_3_1_6"/>
<dbReference type="UniPathway" id="UPA00056">
    <property type="reaction ID" value="UER00093"/>
</dbReference>
<dbReference type="Proteomes" id="UP000008824">
    <property type="component" value="Chromosome"/>
</dbReference>
<dbReference type="GO" id="GO:0050518">
    <property type="term" value="F:2-C-methyl-D-erythritol 4-phosphate cytidylyltransferase activity"/>
    <property type="evidence" value="ECO:0007669"/>
    <property type="project" value="UniProtKB-UniRule"/>
</dbReference>
<dbReference type="GO" id="GO:0019288">
    <property type="term" value="P:isopentenyl diphosphate biosynthetic process, methylerythritol 4-phosphate pathway"/>
    <property type="evidence" value="ECO:0007669"/>
    <property type="project" value="UniProtKB-UniRule"/>
</dbReference>
<dbReference type="CDD" id="cd02516">
    <property type="entry name" value="CDP-ME_synthetase"/>
    <property type="match status" value="1"/>
</dbReference>
<dbReference type="FunFam" id="3.90.550.10:FF:000003">
    <property type="entry name" value="2-C-methyl-D-erythritol 4-phosphate cytidylyltransferase"/>
    <property type="match status" value="1"/>
</dbReference>
<dbReference type="Gene3D" id="3.90.550.10">
    <property type="entry name" value="Spore Coat Polysaccharide Biosynthesis Protein SpsA, Chain A"/>
    <property type="match status" value="1"/>
</dbReference>
<dbReference type="HAMAP" id="MF_00108">
    <property type="entry name" value="IspD"/>
    <property type="match status" value="1"/>
</dbReference>
<dbReference type="InterPro" id="IPR001228">
    <property type="entry name" value="IspD"/>
</dbReference>
<dbReference type="InterPro" id="IPR034683">
    <property type="entry name" value="IspD/TarI"/>
</dbReference>
<dbReference type="InterPro" id="IPR050088">
    <property type="entry name" value="IspD/TarI_cytidylyltransf_bact"/>
</dbReference>
<dbReference type="InterPro" id="IPR018294">
    <property type="entry name" value="ISPD_synthase_CS"/>
</dbReference>
<dbReference type="InterPro" id="IPR029044">
    <property type="entry name" value="Nucleotide-diphossugar_trans"/>
</dbReference>
<dbReference type="NCBIfam" id="TIGR00453">
    <property type="entry name" value="ispD"/>
    <property type="match status" value="1"/>
</dbReference>
<dbReference type="PANTHER" id="PTHR32125">
    <property type="entry name" value="2-C-METHYL-D-ERYTHRITOL 4-PHOSPHATE CYTIDYLYLTRANSFERASE, CHLOROPLASTIC"/>
    <property type="match status" value="1"/>
</dbReference>
<dbReference type="PANTHER" id="PTHR32125:SF4">
    <property type="entry name" value="2-C-METHYL-D-ERYTHRITOL 4-PHOSPHATE CYTIDYLYLTRANSFERASE, CHLOROPLASTIC"/>
    <property type="match status" value="1"/>
</dbReference>
<dbReference type="Pfam" id="PF01128">
    <property type="entry name" value="IspD"/>
    <property type="match status" value="1"/>
</dbReference>
<dbReference type="SUPFAM" id="SSF53448">
    <property type="entry name" value="Nucleotide-diphospho-sugar transferases"/>
    <property type="match status" value="1"/>
</dbReference>
<dbReference type="PROSITE" id="PS01295">
    <property type="entry name" value="ISPD"/>
    <property type="match status" value="1"/>
</dbReference>